<protein>
    <recommendedName>
        <fullName evidence="5">Transcriptional coregulator SSA1</fullName>
    </recommendedName>
</protein>
<gene>
    <name evidence="5" type="primary">SSA1</name>
    <name evidence="7" type="ordered locus">CNBC4920</name>
</gene>
<evidence type="ECO:0000250" key="1">
    <source>
        <dbReference type="UniProtKB" id="Q5KKP4"/>
    </source>
</evidence>
<evidence type="ECO:0000255" key="2">
    <source>
        <dbReference type="RuleBase" id="RU003322"/>
    </source>
</evidence>
<evidence type="ECO:0000256" key="3">
    <source>
        <dbReference type="SAM" id="MobiDB-lite"/>
    </source>
</evidence>
<evidence type="ECO:0000269" key="4">
    <source>
    </source>
</evidence>
<evidence type="ECO:0000303" key="5">
    <source>
    </source>
</evidence>
<evidence type="ECO:0000305" key="6"/>
<evidence type="ECO:0000312" key="7">
    <source>
        <dbReference type="EMBL" id="EAL21790.1"/>
    </source>
</evidence>
<dbReference type="EMBL" id="AAEY01000015">
    <property type="protein sequence ID" value="EAL21790.1"/>
    <property type="molecule type" value="Genomic_DNA"/>
</dbReference>
<dbReference type="RefSeq" id="XP_776437.1">
    <property type="nucleotide sequence ID" value="XM_771344.1"/>
</dbReference>
<dbReference type="SMR" id="F5HB71"/>
<dbReference type="GeneID" id="4935157"/>
<dbReference type="KEGG" id="cnb:CNBC4920"/>
<dbReference type="VEuPathDB" id="FungiDB:CNBC4920"/>
<dbReference type="HOGENOM" id="CLU_005965_3_2_1"/>
<dbReference type="OrthoDB" id="4926at5206"/>
<dbReference type="GO" id="GO:0005634">
    <property type="term" value="C:nucleus"/>
    <property type="evidence" value="ECO:0000250"/>
    <property type="project" value="UniProtKB"/>
</dbReference>
<dbReference type="GO" id="GO:0005524">
    <property type="term" value="F:ATP binding"/>
    <property type="evidence" value="ECO:0007669"/>
    <property type="project" value="UniProtKB-KW"/>
</dbReference>
<dbReference type="GO" id="GO:0140662">
    <property type="term" value="F:ATP-dependent protein folding chaperone"/>
    <property type="evidence" value="ECO:0007669"/>
    <property type="project" value="InterPro"/>
</dbReference>
<dbReference type="GO" id="GO:0003712">
    <property type="term" value="F:transcription coregulator activity"/>
    <property type="evidence" value="ECO:0000250"/>
    <property type="project" value="UniProtKB"/>
</dbReference>
<dbReference type="CDD" id="cd10233">
    <property type="entry name" value="ASKHA_NBD_HSP70_HSPA1"/>
    <property type="match status" value="1"/>
</dbReference>
<dbReference type="FunFam" id="2.60.34.10:FF:000002">
    <property type="entry name" value="Heat shock 70 kDa"/>
    <property type="match status" value="1"/>
</dbReference>
<dbReference type="FunFam" id="3.90.640.10:FF:000002">
    <property type="entry name" value="Heat shock 70 kDa"/>
    <property type="match status" value="1"/>
</dbReference>
<dbReference type="FunFam" id="3.30.420.40:FF:000172">
    <property type="entry name" value="Heat shock 70 kDa protein"/>
    <property type="match status" value="1"/>
</dbReference>
<dbReference type="FunFam" id="3.30.30.30:FF:000001">
    <property type="entry name" value="heat shock 70 kDa protein-like"/>
    <property type="match status" value="1"/>
</dbReference>
<dbReference type="FunFam" id="1.20.1270.10:FF:000016">
    <property type="entry name" value="Heat shock protein 70"/>
    <property type="match status" value="1"/>
</dbReference>
<dbReference type="FunFam" id="3.30.420.40:FF:000026">
    <property type="entry name" value="Heat shock protein 70"/>
    <property type="match status" value="1"/>
</dbReference>
<dbReference type="Gene3D" id="1.20.1270.10">
    <property type="match status" value="1"/>
</dbReference>
<dbReference type="Gene3D" id="3.30.30.30">
    <property type="match status" value="1"/>
</dbReference>
<dbReference type="Gene3D" id="3.30.420.40">
    <property type="match status" value="2"/>
</dbReference>
<dbReference type="Gene3D" id="3.90.640.10">
    <property type="entry name" value="Actin, Chain A, domain 4"/>
    <property type="match status" value="1"/>
</dbReference>
<dbReference type="Gene3D" id="2.60.34.10">
    <property type="entry name" value="Substrate Binding Domain Of DNAk, Chain A, domain 1"/>
    <property type="match status" value="1"/>
</dbReference>
<dbReference type="InterPro" id="IPR043129">
    <property type="entry name" value="ATPase_NBD"/>
</dbReference>
<dbReference type="InterPro" id="IPR018181">
    <property type="entry name" value="Heat_shock_70_CS"/>
</dbReference>
<dbReference type="InterPro" id="IPR029048">
    <property type="entry name" value="HSP70_C_sf"/>
</dbReference>
<dbReference type="InterPro" id="IPR029047">
    <property type="entry name" value="HSP70_peptide-bd_sf"/>
</dbReference>
<dbReference type="InterPro" id="IPR013126">
    <property type="entry name" value="Hsp_70_fam"/>
</dbReference>
<dbReference type="NCBIfam" id="NF001413">
    <property type="entry name" value="PRK00290.1"/>
    <property type="match status" value="1"/>
</dbReference>
<dbReference type="PANTHER" id="PTHR19375">
    <property type="entry name" value="HEAT SHOCK PROTEIN 70KDA"/>
    <property type="match status" value="1"/>
</dbReference>
<dbReference type="Pfam" id="PF00012">
    <property type="entry name" value="HSP70"/>
    <property type="match status" value="1"/>
</dbReference>
<dbReference type="PRINTS" id="PR00301">
    <property type="entry name" value="HEATSHOCK70"/>
</dbReference>
<dbReference type="SUPFAM" id="SSF53067">
    <property type="entry name" value="Actin-like ATPase domain"/>
    <property type="match status" value="2"/>
</dbReference>
<dbReference type="SUPFAM" id="SSF100934">
    <property type="entry name" value="Heat shock protein 70kD (HSP70), C-terminal subdomain"/>
    <property type="match status" value="1"/>
</dbReference>
<dbReference type="SUPFAM" id="SSF100920">
    <property type="entry name" value="Heat shock protein 70kD (HSP70), peptide-binding domain"/>
    <property type="match status" value="1"/>
</dbReference>
<dbReference type="PROSITE" id="PS00297">
    <property type="entry name" value="HSP70_1"/>
    <property type="match status" value="1"/>
</dbReference>
<dbReference type="PROSITE" id="PS00329">
    <property type="entry name" value="HSP70_2"/>
    <property type="match status" value="1"/>
</dbReference>
<dbReference type="PROSITE" id="PS01036">
    <property type="entry name" value="HSP70_3"/>
    <property type="match status" value="1"/>
</dbReference>
<sequence length="640" mass="69353">MVKAVGIDLGTTYSCVAVWQNDRVEIIANDQGNRTTPSYVAFNDSERLIGDAAKNQVAMNPYNTVFDAKRLIGRKFEDAEVQADMKHWPFKVIDRAGKPAIQVEYRGEEKVFTPEEISSMVLIKMKETAEAYLGGTVSKAVVTVPAYFNDSQRQATKDAGAIAGLDVLRIINEPTAAAIAYGLDKKSEGEKNVLIFDLGGGTFDVSLLTIEEGIFEVKATAGDTHLGGEDFDNRLVNHFVQEFKRKNKKDLSSNARALRRLRTACERAKRTLSSAAQTSIEIDSLFDGIDFYTSITRARFEELCQDLFRSTMDPVEKVLRDSKIDKSSVNEIVLVGGSTRIPKIQKLVSDMFSGREPNRSINPDEAVAYGAAVQAAILTGDTSEATQDLLLLDVAPLSMGIETAGGIMTPLIKRNTTVPTKKSEVFSTYSDNQPGVLIQVFEGERAKTKDCNLLGKFDLSGIPPAPRGVPQIEVSFDVDANGILNVNAADKSTGKSSKITITNDKGRLSKEEIERMLAEAEKFKAEDEAAAATVQAKNGLESYSYSLKTTLSDNQDKFDAADHETLSKKVDEVISSLDTMQSASKEEFESLQKELEAVANPIMTKFYGAQGGAPGGAPGGFPGAGGAPAQEEGPSVEEVD</sequence>
<accession>F5HB71</accession>
<keyword id="KW-0067">ATP-binding</keyword>
<keyword id="KW-0547">Nucleotide-binding</keyword>
<keyword id="KW-0539">Nucleus</keyword>
<keyword id="KW-0346">Stress response</keyword>
<keyword id="KW-0804">Transcription</keyword>
<keyword id="KW-0805">Transcription regulation</keyword>
<reference key="1">
    <citation type="journal article" date="2005" name="Science">
        <title>The genome of the basidiomycetous yeast and human pathogen Cryptococcus neoformans.</title>
        <authorList>
            <person name="Loftus B.J."/>
            <person name="Fung E."/>
            <person name="Roncaglia P."/>
            <person name="Rowley D."/>
            <person name="Amedeo P."/>
            <person name="Bruno D."/>
            <person name="Vamathevan J."/>
            <person name="Miranda M."/>
            <person name="Anderson I.J."/>
            <person name="Fraser J.A."/>
            <person name="Allen J.E."/>
            <person name="Bosdet I.E."/>
            <person name="Brent M.R."/>
            <person name="Chiu R."/>
            <person name="Doering T.L."/>
            <person name="Donlin M.J."/>
            <person name="D'Souza C.A."/>
            <person name="Fox D.S."/>
            <person name="Grinberg V."/>
            <person name="Fu J."/>
            <person name="Fukushima M."/>
            <person name="Haas B.J."/>
            <person name="Huang J.C."/>
            <person name="Janbon G."/>
            <person name="Jones S.J.M."/>
            <person name="Koo H.L."/>
            <person name="Krzywinski M.I."/>
            <person name="Kwon-Chung K.J."/>
            <person name="Lengeler K.B."/>
            <person name="Maiti R."/>
            <person name="Marra M.A."/>
            <person name="Marra R.E."/>
            <person name="Mathewson C.A."/>
            <person name="Mitchell T.G."/>
            <person name="Pertea M."/>
            <person name="Riggs F.R."/>
            <person name="Salzberg S.L."/>
            <person name="Schein J.E."/>
            <person name="Shvartsbeyn A."/>
            <person name="Shin H."/>
            <person name="Shumway M."/>
            <person name="Specht C.A."/>
            <person name="Suh B.B."/>
            <person name="Tenney A."/>
            <person name="Utterback T.R."/>
            <person name="Wickes B.L."/>
            <person name="Wortman J.R."/>
            <person name="Wye N.H."/>
            <person name="Kronstad J.W."/>
            <person name="Lodge J.K."/>
            <person name="Heitman J."/>
            <person name="Davis R.W."/>
            <person name="Fraser C.M."/>
            <person name="Hyman R.W."/>
        </authorList>
    </citation>
    <scope>NUCLEOTIDE SEQUENCE [LARGE SCALE GENOMIC DNA]</scope>
    <source>
        <strain>B-3501A</strain>
    </source>
</reference>
<reference evidence="6" key="2">
    <citation type="journal article" date="2006" name="Mol. Microbiol.">
        <title>The Hsp70 member, Ssa1, acts as a DNA-binding transcriptional co-activator of laccase in Cryptococcus neoformans.</title>
        <authorList>
            <person name="Zhang S."/>
            <person name="Hacham M."/>
            <person name="Panepinto J."/>
            <person name="Hu G."/>
            <person name="Shin S."/>
            <person name="Zhu X."/>
            <person name="Williamson P.R."/>
        </authorList>
    </citation>
    <scope>FUNCTION</scope>
    <scope>INTERACTION WITH HSF1</scope>
    <scope>IDENTIFICATION BY MASS SPECTROMETRY</scope>
</reference>
<name>HSP71_CRYNB</name>
<organism>
    <name type="scientific">Cryptococcus neoformans var. neoformans serotype D (strain B-3501A)</name>
    <name type="common">Filobasidiella neoformans</name>
    <dbReference type="NCBI Taxonomy" id="283643"/>
    <lineage>
        <taxon>Eukaryota</taxon>
        <taxon>Fungi</taxon>
        <taxon>Dikarya</taxon>
        <taxon>Basidiomycota</taxon>
        <taxon>Agaricomycotina</taxon>
        <taxon>Tremellomycetes</taxon>
        <taxon>Tremellales</taxon>
        <taxon>Cryptococcaceae</taxon>
        <taxon>Cryptococcus</taxon>
        <taxon>Cryptococcus neoformans species complex</taxon>
    </lineage>
</organism>
<proteinExistence type="evidence at protein level"/>
<feature type="chain" id="PRO_0000452017" description="Transcriptional coregulator SSA1">
    <location>
        <begin position="1"/>
        <end position="640"/>
    </location>
</feature>
<feature type="region of interest" description="Disordered" evidence="3">
    <location>
        <begin position="606"/>
        <end position="640"/>
    </location>
</feature>
<feature type="compositionally biased region" description="Gly residues" evidence="3">
    <location>
        <begin position="609"/>
        <end position="626"/>
    </location>
</feature>
<comment type="function">
    <text evidence="1 4">Transcriptional coregulator that functions together with transcription factor HSF1 (PubMed:17040492). Positively regulates the expression of laccase LAC1 during glucose starvation (By similarity).</text>
</comment>
<comment type="subunit">
    <text evidence="4">Interacts with transcription factor HSF1 on chromatin.</text>
</comment>
<comment type="subcellular location">
    <subcellularLocation>
        <location evidence="1">Nucleus</location>
    </subcellularLocation>
</comment>
<comment type="similarity">
    <text evidence="2">Belongs to the heat shock protein 70 family.</text>
</comment>